<gene>
    <name evidence="6" type="primary">KIR2DS2</name>
    <name type="synonym">CD158J</name>
    <name type="synonym">NKAT5</name>
</gene>
<dbReference type="EMBL" id="U24079">
    <property type="protein sequence ID" value="AAC50338.1"/>
    <property type="status" value="ALT_INIT"/>
    <property type="molecule type" value="mRNA"/>
</dbReference>
<dbReference type="EMBL" id="L41347">
    <property type="protein sequence ID" value="AAA65225.1"/>
    <property type="molecule type" value="mRNA"/>
</dbReference>
<dbReference type="EMBL" id="X89893">
    <property type="protein sequence ID" value="CAA61983.1"/>
    <property type="molecule type" value="mRNA"/>
</dbReference>
<dbReference type="EMBL" id="AY366243">
    <property type="protein sequence ID" value="AAR16201.1"/>
    <property type="molecule type" value="mRNA"/>
</dbReference>
<dbReference type="EMBL" id="AL133414">
    <property type="status" value="NOT_ANNOTATED_CDS"/>
    <property type="molecule type" value="Genomic_DNA"/>
</dbReference>
<dbReference type="RefSeq" id="NP_001278624.1">
    <property type="nucleotide sequence ID" value="NM_001291695.1"/>
</dbReference>
<dbReference type="RefSeq" id="NP_001278625.1">
    <property type="nucleotide sequence ID" value="NM_001291696.1"/>
</dbReference>
<dbReference type="RefSeq" id="NP_001278629.1">
    <property type="nucleotide sequence ID" value="NM_001291700.1"/>
</dbReference>
<dbReference type="RefSeq" id="NP_001278630.1">
    <property type="nucleotide sequence ID" value="NM_001291701.1"/>
</dbReference>
<dbReference type="RefSeq" id="NP_036444.1">
    <property type="nucleotide sequence ID" value="NM_012312.5"/>
</dbReference>
<dbReference type="RefSeq" id="XP_016885764.1">
    <property type="nucleotide sequence ID" value="XM_017030275.1"/>
</dbReference>
<dbReference type="PDB" id="1M4K">
    <property type="method" value="X-ray"/>
    <property type="resolution" value="2.30 A"/>
    <property type="chains" value="A=22-221"/>
</dbReference>
<dbReference type="PDB" id="4N8V">
    <property type="method" value="X-ray"/>
    <property type="resolution" value="2.50 A"/>
    <property type="chains" value="G/I=22-221"/>
</dbReference>
<dbReference type="PDB" id="7DUU">
    <property type="method" value="X-ray"/>
    <property type="resolution" value="2.51 A"/>
    <property type="chains" value="D=22-221"/>
</dbReference>
<dbReference type="PDBsum" id="1M4K"/>
<dbReference type="PDBsum" id="4N8V"/>
<dbReference type="PDBsum" id="7DUU"/>
<dbReference type="SMR" id="P43631"/>
<dbReference type="BioGRID" id="110005">
    <property type="interactions" value="63"/>
</dbReference>
<dbReference type="BioGRID" id="110008">
    <property type="interactions" value="41"/>
</dbReference>
<dbReference type="BioGRID" id="125444">
    <property type="interactions" value="51"/>
</dbReference>
<dbReference type="FunCoup" id="P43631">
    <property type="interactions" value="572"/>
</dbReference>
<dbReference type="IntAct" id="P43631">
    <property type="interactions" value="25"/>
</dbReference>
<dbReference type="GlyCosmos" id="P43631">
    <property type="glycosylation" value="3 sites, No reported glycans"/>
</dbReference>
<dbReference type="GlyGen" id="P43631">
    <property type="glycosylation" value="5 sites"/>
</dbReference>
<dbReference type="iPTMnet" id="P43631"/>
<dbReference type="PhosphoSitePlus" id="P43631"/>
<dbReference type="BioMuta" id="KIR2DS2"/>
<dbReference type="DMDM" id="13124793"/>
<dbReference type="MassIVE" id="P43631"/>
<dbReference type="PeptideAtlas" id="P43631"/>
<dbReference type="DNASU" id="100132285"/>
<dbReference type="Ensembl" id="ENST00000610441.1">
    <property type="protein sequence ID" value="ENSP00000484281.1"/>
    <property type="gene ID" value="ENSG00000277885.1"/>
</dbReference>
<dbReference type="Ensembl" id="ENST00000611495.1">
    <property type="protein sequence ID" value="ENSP00000484082.1"/>
    <property type="gene ID" value="ENSG00000276425.1"/>
</dbReference>
<dbReference type="Ensembl" id="ENST00000612182.1">
    <property type="protein sequence ID" value="ENSP00000478509.1"/>
    <property type="gene ID" value="ENSG00000274438.1"/>
</dbReference>
<dbReference type="Ensembl" id="ENST00000613378.1">
    <property type="protein sequence ID" value="ENSP00000482725.1"/>
    <property type="gene ID" value="ENSG00000274518.1"/>
</dbReference>
<dbReference type="Ensembl" id="ENST00000614231.1">
    <property type="protein sequence ID" value="ENSP00000482770.1"/>
    <property type="gene ID" value="ENSG00000275253.1"/>
</dbReference>
<dbReference type="Ensembl" id="ENST00000614727.4">
    <property type="protein sequence ID" value="ENSP00000483792.1"/>
    <property type="gene ID" value="ENSG00000276139.4"/>
</dbReference>
<dbReference type="Ensembl" id="ENST00000616472.1">
    <property type="protein sequence ID" value="ENSP00000482637.1"/>
    <property type="gene ID" value="ENSG00000275452.2"/>
</dbReference>
<dbReference type="Ensembl" id="ENST00000617284.5">
    <property type="protein sequence ID" value="ENSP00000478014.1"/>
    <property type="gene ID" value="ENSG00000278300.5"/>
</dbReference>
<dbReference type="Ensembl" id="ENST00000617984.1">
    <property type="protein sequence ID" value="ENSP00000477892.1"/>
    <property type="gene ID" value="ENSG00000275737.1"/>
</dbReference>
<dbReference type="Ensembl" id="ENST00000618364.1">
    <property type="protein sequence ID" value="ENSP00000483804.1"/>
    <property type="gene ID" value="ENSG00000275735.1"/>
</dbReference>
<dbReference type="Ensembl" id="ENST00000619473.1">
    <property type="protein sequence ID" value="ENSP00000484400.1"/>
    <property type="gene ID" value="ENSG00000276258.1"/>
</dbReference>
<dbReference type="Ensembl" id="ENST00000622127.2">
    <property type="protein sequence ID" value="ENSP00000481307.1"/>
    <property type="gene ID" value="ENSG00000278152.3"/>
</dbReference>
<dbReference type="Ensembl" id="ENST00000640938.2">
    <property type="protein sequence ID" value="ENSP00000492515.1"/>
    <property type="gene ID" value="ENSG00000284033.2"/>
</dbReference>
<dbReference type="Ensembl" id="ENST00000643590.1">
    <property type="protein sequence ID" value="ENSP00000495768.1"/>
    <property type="gene ID" value="ENSG00000284033.2"/>
</dbReference>
<dbReference type="GeneID" id="100132285"/>
<dbReference type="KEGG" id="hsa:100132285"/>
<dbReference type="MANE-Select" id="ENST00000617284.5">
    <property type="protein sequence ID" value="ENSP00000478014.1"/>
    <property type="RefSeq nucleotide sequence ID" value="NM_012312.5"/>
    <property type="RefSeq protein sequence ID" value="NP_036444.1"/>
</dbReference>
<dbReference type="UCSC" id="uc032izx.2">
    <property type="organism name" value="human"/>
</dbReference>
<dbReference type="AGR" id="HGNC:6334"/>
<dbReference type="CTD" id="100132285"/>
<dbReference type="DisGeNET" id="100132285"/>
<dbReference type="GeneCards" id="KIR2DS2"/>
<dbReference type="HGNC" id="HGNC:6334">
    <property type="gene designation" value="KIR2DS2"/>
</dbReference>
<dbReference type="MIM" id="604953">
    <property type="type" value="gene"/>
</dbReference>
<dbReference type="neXtProt" id="NX_P43631"/>
<dbReference type="PharmGKB" id="PA30119"/>
<dbReference type="InParanoid" id="P43631"/>
<dbReference type="PAN-GO" id="P43631">
    <property type="GO annotations" value="1 GO annotation based on evolutionary models"/>
</dbReference>
<dbReference type="PathwayCommons" id="P43631"/>
<dbReference type="Reactome" id="R-HSA-198933">
    <property type="pathway name" value="Immunoregulatory interactions between a Lymphoid and a non-Lymphoid cell"/>
</dbReference>
<dbReference type="Reactome" id="R-HSA-2172127">
    <property type="pathway name" value="DAP12 interactions"/>
</dbReference>
<dbReference type="SignaLink" id="P43631"/>
<dbReference type="BioGRID-ORCS" id="100132285">
    <property type="hits" value="0 hits in 35 CRISPR screens"/>
</dbReference>
<dbReference type="EvolutionaryTrace" id="P43631"/>
<dbReference type="GenomeRNAi" id="100132285"/>
<dbReference type="Pharos" id="P43631">
    <property type="development level" value="Tdark"/>
</dbReference>
<dbReference type="PRO" id="PR:P43631"/>
<dbReference type="Proteomes" id="UP000005640">
    <property type="component" value="Unplaced"/>
</dbReference>
<dbReference type="RNAct" id="P43631">
    <property type="molecule type" value="protein"/>
</dbReference>
<dbReference type="GO" id="GO:0016020">
    <property type="term" value="C:membrane"/>
    <property type="evidence" value="ECO:0000303"/>
    <property type="project" value="UniProtKB"/>
</dbReference>
<dbReference type="GO" id="GO:0005886">
    <property type="term" value="C:plasma membrane"/>
    <property type="evidence" value="ECO:0000318"/>
    <property type="project" value="GO_Central"/>
</dbReference>
<dbReference type="GO" id="GO:0004888">
    <property type="term" value="F:transmembrane signaling receptor activity"/>
    <property type="evidence" value="ECO:0000303"/>
    <property type="project" value="UniProtKB"/>
</dbReference>
<dbReference type="GO" id="GO:0006955">
    <property type="term" value="P:immune response"/>
    <property type="evidence" value="ECO:0000303"/>
    <property type="project" value="UniProtKB"/>
</dbReference>
<dbReference type="GO" id="GO:0002764">
    <property type="term" value="P:immune response-regulating signaling pathway"/>
    <property type="evidence" value="ECO:0000318"/>
    <property type="project" value="GO_Central"/>
</dbReference>
<dbReference type="GO" id="GO:0002222">
    <property type="term" value="P:stimulatory killer cell immunoglobulin-like receptor signaling pathway"/>
    <property type="evidence" value="ECO:0000314"/>
    <property type="project" value="UniProtKB"/>
</dbReference>
<dbReference type="CDD" id="cd05711">
    <property type="entry name" value="IgC2_D2_LILR_KIR_like"/>
    <property type="match status" value="1"/>
</dbReference>
<dbReference type="FunFam" id="2.60.40.10:FF:000033">
    <property type="entry name" value="Killer cell immunoglobulin-like receptor"/>
    <property type="match status" value="1"/>
</dbReference>
<dbReference type="FunFam" id="2.60.40.10:FF:000049">
    <property type="entry name" value="Leukocyte immunoglobulin-like receptor subfamily B member 1"/>
    <property type="match status" value="1"/>
</dbReference>
<dbReference type="Gene3D" id="2.60.40.10">
    <property type="entry name" value="Immunoglobulins"/>
    <property type="match status" value="2"/>
</dbReference>
<dbReference type="InterPro" id="IPR036179">
    <property type="entry name" value="Ig-like_dom_sf"/>
</dbReference>
<dbReference type="InterPro" id="IPR013783">
    <property type="entry name" value="Ig-like_fold"/>
</dbReference>
<dbReference type="InterPro" id="IPR050412">
    <property type="entry name" value="Ig-like_Receptors_ImmuneReg"/>
</dbReference>
<dbReference type="InterPro" id="IPR003599">
    <property type="entry name" value="Ig_sub"/>
</dbReference>
<dbReference type="InterPro" id="IPR013151">
    <property type="entry name" value="Immunoglobulin_dom"/>
</dbReference>
<dbReference type="PANTHER" id="PTHR11738:SF168">
    <property type="entry name" value="IMMUNOGLOBULIN SUBTYPE DOMAIN-CONTAINING PROTEIN-RELATED"/>
    <property type="match status" value="1"/>
</dbReference>
<dbReference type="PANTHER" id="PTHR11738">
    <property type="entry name" value="MHC CLASS I NK CELL RECEPTOR"/>
    <property type="match status" value="1"/>
</dbReference>
<dbReference type="Pfam" id="PF00047">
    <property type="entry name" value="ig"/>
    <property type="match status" value="2"/>
</dbReference>
<dbReference type="SMART" id="SM00409">
    <property type="entry name" value="IG"/>
    <property type="match status" value="2"/>
</dbReference>
<dbReference type="SUPFAM" id="SSF48726">
    <property type="entry name" value="Immunoglobulin"/>
    <property type="match status" value="2"/>
</dbReference>
<keyword id="KW-0002">3D-structure</keyword>
<keyword id="KW-1003">Cell membrane</keyword>
<keyword id="KW-1015">Disulfide bond</keyword>
<keyword id="KW-0325">Glycoprotein</keyword>
<keyword id="KW-0393">Immunoglobulin domain</keyword>
<keyword id="KW-0472">Membrane</keyword>
<keyword id="KW-0675">Receptor</keyword>
<keyword id="KW-1185">Reference proteome</keyword>
<keyword id="KW-0677">Repeat</keyword>
<keyword id="KW-0732">Signal</keyword>
<keyword id="KW-0812">Transmembrane</keyword>
<keyword id="KW-1133">Transmembrane helix</keyword>
<feature type="signal peptide" evidence="1">
    <location>
        <begin position="1"/>
        <end position="21"/>
    </location>
</feature>
<feature type="chain" id="PRO_0000015083" description="Killer cell immunoglobulin-like receptor 2DS2">
    <location>
        <begin position="22"/>
        <end position="304"/>
    </location>
</feature>
<feature type="topological domain" description="Extracellular" evidence="2">
    <location>
        <begin position="22"/>
        <end position="245"/>
    </location>
</feature>
<feature type="transmembrane region" description="Helical" evidence="2">
    <location>
        <begin position="246"/>
        <end position="265"/>
    </location>
</feature>
<feature type="topological domain" description="Cytoplasmic" evidence="2">
    <location>
        <begin position="266"/>
        <end position="304"/>
    </location>
</feature>
<feature type="domain" description="Ig-like C2-type 1">
    <location>
        <begin position="42"/>
        <end position="107"/>
    </location>
</feature>
<feature type="domain" description="Ig-like C2-type 2">
    <location>
        <begin position="142"/>
        <end position="205"/>
    </location>
</feature>
<feature type="region of interest" description="Disordered" evidence="3">
    <location>
        <begin position="220"/>
        <end position="239"/>
    </location>
</feature>
<feature type="region of interest" description="Disordered" evidence="3">
    <location>
        <begin position="280"/>
        <end position="304"/>
    </location>
</feature>
<feature type="glycosylation site" description="N-linked (GlcNAc...) asparagine" evidence="2">
    <location>
        <position position="84"/>
    </location>
</feature>
<feature type="glycosylation site" description="N-linked (GlcNAc...) asparagine" evidence="2">
    <location>
        <position position="178"/>
    </location>
</feature>
<feature type="glycosylation site" description="N-linked (GlcNAc...) asparagine" evidence="2">
    <location>
        <position position="211"/>
    </location>
</feature>
<feature type="disulfide bond" evidence="4">
    <location>
        <begin position="49"/>
        <end position="100"/>
    </location>
</feature>
<feature type="disulfide bond" evidence="4">
    <location>
        <begin position="149"/>
        <end position="198"/>
    </location>
</feature>
<feature type="sequence variant" id="VAR_059420" description="In dbSNP:rs189739973.">
    <original>A</original>
    <variation>V</variation>
    <location>
        <position position="9"/>
    </location>
</feature>
<feature type="sequence variant" id="VAR_059421" description="In dbSNP:rs1049626616.">
    <original>Y</original>
    <variation>F</variation>
    <location>
        <position position="66"/>
    </location>
</feature>
<feature type="sequence variant" id="VAR_020090" description="In dbSNP:rs2262065.">
    <original>K</original>
    <variation>E</variation>
    <location>
        <position position="237"/>
    </location>
</feature>
<feature type="sequence variant" id="VAR_059422" description="In dbSNP:rs1063326.">
    <original>K</original>
    <variation>N</variation>
    <location>
        <position position="254"/>
    </location>
</feature>
<feature type="sequence conflict" description="In Ref. 3; CAA61983." evidence="5" ref="3">
    <original>W</original>
    <variation>G</variation>
    <location>
        <position position="20"/>
    </location>
</feature>
<feature type="strand" evidence="7">
    <location>
        <begin position="30"/>
        <end position="35"/>
    </location>
</feature>
<feature type="strand" evidence="7">
    <location>
        <begin position="37"/>
        <end position="40"/>
    </location>
</feature>
<feature type="strand" evidence="7">
    <location>
        <begin position="45"/>
        <end position="53"/>
    </location>
</feature>
<feature type="strand" evidence="7">
    <location>
        <begin position="56"/>
        <end position="62"/>
    </location>
</feature>
<feature type="strand" evidence="7">
    <location>
        <begin position="68"/>
        <end position="73"/>
    </location>
</feature>
<feature type="strand" evidence="7">
    <location>
        <begin position="75"/>
        <end position="79"/>
    </location>
</feature>
<feature type="strand" evidence="7">
    <location>
        <begin position="81"/>
        <end position="87"/>
    </location>
</feature>
<feature type="helix" evidence="7">
    <location>
        <begin position="92"/>
        <end position="94"/>
    </location>
</feature>
<feature type="strand" evidence="7">
    <location>
        <begin position="96"/>
        <end position="103"/>
    </location>
</feature>
<feature type="strand" evidence="7">
    <location>
        <begin position="105"/>
        <end position="108"/>
    </location>
</feature>
<feature type="strand" evidence="7">
    <location>
        <begin position="118"/>
        <end position="123"/>
    </location>
</feature>
<feature type="strand" evidence="7">
    <location>
        <begin position="130"/>
        <end position="135"/>
    </location>
</feature>
<feature type="strand" evidence="7">
    <location>
        <begin position="137"/>
        <end position="139"/>
    </location>
</feature>
<feature type="strand" evidence="7">
    <location>
        <begin position="143"/>
        <end position="162"/>
    </location>
</feature>
<feature type="strand" evidence="7">
    <location>
        <begin position="169"/>
        <end position="172"/>
    </location>
</feature>
<feature type="strand" evidence="9">
    <location>
        <begin position="174"/>
        <end position="177"/>
    </location>
</feature>
<feature type="strand" evidence="7">
    <location>
        <begin position="180"/>
        <end position="189"/>
    </location>
</feature>
<feature type="strand" evidence="7">
    <location>
        <begin position="194"/>
        <end position="201"/>
    </location>
</feature>
<feature type="strand" evidence="8">
    <location>
        <begin position="205"/>
        <end position="209"/>
    </location>
</feature>
<feature type="strand" evidence="7">
    <location>
        <begin position="216"/>
        <end position="220"/>
    </location>
</feature>
<proteinExistence type="evidence at protein level"/>
<protein>
    <recommendedName>
        <fullName evidence="5">Killer cell immunoglobulin-like receptor 2DS2</fullName>
    </recommendedName>
    <alternativeName>
        <fullName>CD158 antigen-like family member J</fullName>
    </alternativeName>
    <alternativeName>
        <fullName>NK receptor 183 ActI</fullName>
    </alternativeName>
    <alternativeName>
        <fullName>Natural killer-associated transcript 5</fullName>
        <shortName>NKAT-5</shortName>
    </alternativeName>
    <alternativeName>
        <fullName>p58 natural killer cell receptor clone CL-49</fullName>
        <shortName>p58 NK receptor CL-49</shortName>
    </alternativeName>
    <cdAntigenName>CD158j</cdAntigenName>
</protein>
<evidence type="ECO:0000250" key="1"/>
<evidence type="ECO:0000255" key="2"/>
<evidence type="ECO:0000256" key="3">
    <source>
        <dbReference type="SAM" id="MobiDB-lite"/>
    </source>
</evidence>
<evidence type="ECO:0000269" key="4">
    <source>
    </source>
</evidence>
<evidence type="ECO:0000305" key="5"/>
<evidence type="ECO:0000312" key="6">
    <source>
        <dbReference type="HGNC" id="HGNC:6334"/>
    </source>
</evidence>
<evidence type="ECO:0007829" key="7">
    <source>
        <dbReference type="PDB" id="1M4K"/>
    </source>
</evidence>
<evidence type="ECO:0007829" key="8">
    <source>
        <dbReference type="PDB" id="4N8V"/>
    </source>
</evidence>
<evidence type="ECO:0007829" key="9">
    <source>
        <dbReference type="PDB" id="7DUU"/>
    </source>
</evidence>
<organism>
    <name type="scientific">Homo sapiens</name>
    <name type="common">Human</name>
    <dbReference type="NCBI Taxonomy" id="9606"/>
    <lineage>
        <taxon>Eukaryota</taxon>
        <taxon>Metazoa</taxon>
        <taxon>Chordata</taxon>
        <taxon>Craniata</taxon>
        <taxon>Vertebrata</taxon>
        <taxon>Euteleostomi</taxon>
        <taxon>Mammalia</taxon>
        <taxon>Eutheria</taxon>
        <taxon>Euarchontoglires</taxon>
        <taxon>Primates</taxon>
        <taxon>Haplorrhini</taxon>
        <taxon>Catarrhini</taxon>
        <taxon>Hominidae</taxon>
        <taxon>Homo</taxon>
    </lineage>
</organism>
<accession>P43631</accession>
<accession>Q14955</accession>
<accession>Q6H2G9</accession>
<comment type="function">
    <text>Receptor on natural killer (NK) cells for HLA-C alleles. Does not inhibit the activity of NK cells.</text>
</comment>
<comment type="subcellular location">
    <subcellularLocation>
        <location>Cell membrane</location>
        <topology>Single-pass type I membrane protein</topology>
    </subcellularLocation>
</comment>
<comment type="similarity">
    <text evidence="5">Belongs to the immunoglobulin superfamily.</text>
</comment>
<comment type="sequence caution" evidence="5">
    <conflict type="erroneous initiation">
        <sequence resource="EMBL-CDS" id="AAC50338"/>
    </conflict>
</comment>
<reference key="1">
    <citation type="journal article" date="1995" name="Immunity">
        <title>Molecular clones of the p58 NK cell receptor reveal immunoglobulin-related molecules with diversity in both the extra- and intracellular domains.</title>
        <authorList>
            <person name="Wagtmann N."/>
            <person name="Biassoni R."/>
            <person name="Cantoni C."/>
            <person name="Verdiani S."/>
            <person name="Malnati M.S."/>
            <person name="Vitale M."/>
            <person name="Bottino C."/>
            <person name="Moretta L."/>
            <person name="Moretta A."/>
            <person name="Long E.O."/>
        </authorList>
    </citation>
    <scope>NUCLEOTIDE SEQUENCE [MRNA] OF 2-304</scope>
    <source>
        <tissue>Natural killer cell</tissue>
    </source>
</reference>
<reference key="2">
    <citation type="journal article" date="1995" name="Science">
        <title>Cloning of immunoglobulin-superfamily members associated with HLA-C and HLA-B recognition by human natural killer cells.</title>
        <authorList>
            <person name="Colonna M."/>
            <person name="Samaridis J."/>
        </authorList>
    </citation>
    <scope>NUCLEOTIDE SEQUENCE [MRNA]</scope>
</reference>
<reference key="3">
    <citation type="journal article" date="1996" name="J. Exp. Med.">
        <title>The human leukocyte antigen (HLA)-C-specific 'activatory' or 'inhibitory' natural killer cell receptors display highly homologous extracellular domains but differ in their transmembrane and intracytoplasmic portions.</title>
        <authorList>
            <person name="Biassoni R."/>
            <person name="Cantoni C."/>
            <person name="Falco M."/>
            <person name="Verdiani S."/>
            <person name="Bottino C."/>
            <person name="Vitale M."/>
            <person name="Conte R."/>
            <person name="Poggi A."/>
            <person name="Moretta A."/>
            <person name="Moretta L."/>
        </authorList>
    </citation>
    <scope>NUCLEOTIDE SEQUENCE [MRNA]</scope>
    <source>
        <tissue>Lymphoid tissue</tissue>
    </source>
</reference>
<reference key="4">
    <citation type="journal article" date="2003" name="J. Immunol.">
        <title>Activation of a subset of human NK cells upon contact with Plasmodium falciparum-infected erythrocytes.</title>
        <authorList>
            <person name="Artavanis-Tsakonas K."/>
            <person name="Eleme K."/>
            <person name="McQueen K.L."/>
            <person name="Cheng N.W."/>
            <person name="Parham P."/>
            <person name="Davis D.M."/>
            <person name="Riley E.M."/>
        </authorList>
    </citation>
    <scope>NUCLEOTIDE SEQUENCE [MRNA]</scope>
</reference>
<reference key="5">
    <citation type="journal article" date="2004" name="Nature">
        <title>The DNA sequence and biology of human chromosome 19.</title>
        <authorList>
            <person name="Grimwood J."/>
            <person name="Gordon L.A."/>
            <person name="Olsen A.S."/>
            <person name="Terry A."/>
            <person name="Schmutz J."/>
            <person name="Lamerdin J.E."/>
            <person name="Hellsten U."/>
            <person name="Goodstein D."/>
            <person name="Couronne O."/>
            <person name="Tran-Gyamfi M."/>
            <person name="Aerts A."/>
            <person name="Altherr M."/>
            <person name="Ashworth L."/>
            <person name="Bajorek E."/>
            <person name="Black S."/>
            <person name="Branscomb E."/>
            <person name="Caenepeel S."/>
            <person name="Carrano A.V."/>
            <person name="Caoile C."/>
            <person name="Chan Y.M."/>
            <person name="Christensen M."/>
            <person name="Cleland C.A."/>
            <person name="Copeland A."/>
            <person name="Dalin E."/>
            <person name="Dehal P."/>
            <person name="Denys M."/>
            <person name="Detter J.C."/>
            <person name="Escobar J."/>
            <person name="Flowers D."/>
            <person name="Fotopulos D."/>
            <person name="Garcia C."/>
            <person name="Georgescu A.M."/>
            <person name="Glavina T."/>
            <person name="Gomez M."/>
            <person name="Gonzales E."/>
            <person name="Groza M."/>
            <person name="Hammon N."/>
            <person name="Hawkins T."/>
            <person name="Haydu L."/>
            <person name="Ho I."/>
            <person name="Huang W."/>
            <person name="Israni S."/>
            <person name="Jett J."/>
            <person name="Kadner K."/>
            <person name="Kimball H."/>
            <person name="Kobayashi A."/>
            <person name="Larionov V."/>
            <person name="Leem S.-H."/>
            <person name="Lopez F."/>
            <person name="Lou Y."/>
            <person name="Lowry S."/>
            <person name="Malfatti S."/>
            <person name="Martinez D."/>
            <person name="McCready P.M."/>
            <person name="Medina C."/>
            <person name="Morgan J."/>
            <person name="Nelson K."/>
            <person name="Nolan M."/>
            <person name="Ovcharenko I."/>
            <person name="Pitluck S."/>
            <person name="Pollard M."/>
            <person name="Popkie A.P."/>
            <person name="Predki P."/>
            <person name="Quan G."/>
            <person name="Ramirez L."/>
            <person name="Rash S."/>
            <person name="Retterer J."/>
            <person name="Rodriguez A."/>
            <person name="Rogers S."/>
            <person name="Salamov A."/>
            <person name="Salazar A."/>
            <person name="She X."/>
            <person name="Smith D."/>
            <person name="Slezak T."/>
            <person name="Solovyev V."/>
            <person name="Thayer N."/>
            <person name="Tice H."/>
            <person name="Tsai M."/>
            <person name="Ustaszewska A."/>
            <person name="Vo N."/>
            <person name="Wagner M."/>
            <person name="Wheeler J."/>
            <person name="Wu K."/>
            <person name="Xie G."/>
            <person name="Yang J."/>
            <person name="Dubchak I."/>
            <person name="Furey T.S."/>
            <person name="DeJong P."/>
            <person name="Dickson M."/>
            <person name="Gordon D."/>
            <person name="Eichler E.E."/>
            <person name="Pennacchio L.A."/>
            <person name="Richardson P."/>
            <person name="Stubbs L."/>
            <person name="Rokhsar D.S."/>
            <person name="Myers R.M."/>
            <person name="Rubin E.M."/>
            <person name="Lucas S.M."/>
        </authorList>
    </citation>
    <scope>NUCLEOTIDE SEQUENCE [LARGE SCALE GENOMIC DNA]</scope>
</reference>
<reference key="6">
    <citation type="journal article" date="2003" name="J. Exp. Med.">
        <title>Crystal structure of the human natural killer cell activating receptor KIR2DS2 (CD158j).</title>
        <authorList>
            <person name="Saulquin X."/>
            <person name="Gastinel L.N."/>
            <person name="Vivier E."/>
        </authorList>
    </citation>
    <scope>X-RAY CRYSTALLOGRAPHY (2.3 ANGSTROMS) OF 22-221</scope>
    <scope>DISULFIDE BONDS</scope>
</reference>
<name>KI2S2_HUMAN</name>
<sequence length="304" mass="33502">MSLMVVSMACVGFFLLQGAWPHEGVHRKPSLLAHPGPLVKSEETVILQCWSDVRFEHFLLHREGKYKDTLHLIGEHHDGVSKANFSIGPMMQDLAGTYRCYGSVTHSPYQLSAPSDPLDIVITGLYEKPSLSAQPGPTVLAGESVTLSCSSRSSYDMYHLSREGEAHERRFSAGPKVNGTFQADFPLGPATHGGTYRCFGSFRDSPYEWSNSSDPLLVSVTGNPSNSWPSPTEPSSKTGNPRHLHVLIGTSVVKIPFTILLFFLLHRWCSNKKNAAVMDQEPAGNRTVNSEDSDEQDHQEVSYA</sequence>